<evidence type="ECO:0000305" key="1"/>
<reference key="1">
    <citation type="journal article" date="2004" name="Proc. Natl. Acad. Sci. U.S.A.">
        <title>Hematopoietic gene expression profile in zebrafish kidney marrow.</title>
        <authorList>
            <person name="Song H.-D."/>
            <person name="Sun X.-J."/>
            <person name="Deng M."/>
            <person name="Zhang G.-W."/>
            <person name="Zhou Y."/>
            <person name="Wu X.-Y."/>
            <person name="Sheng Y."/>
            <person name="Chen Y."/>
            <person name="Ruan Z."/>
            <person name="Jiang C.-L."/>
            <person name="Fan H.-Y."/>
            <person name="Zon L.I."/>
            <person name="Kanki J.P."/>
            <person name="Liu T.X."/>
            <person name="Look A.T."/>
            <person name="Chen Z."/>
        </authorList>
    </citation>
    <scope>NUCLEOTIDE SEQUENCE [LARGE SCALE MRNA]</scope>
    <source>
        <tissue>Kidney marrow</tissue>
    </source>
</reference>
<reference key="2">
    <citation type="journal article" date="2013" name="Nature">
        <title>The zebrafish reference genome sequence and its relationship to the human genome.</title>
        <authorList>
            <person name="Howe K."/>
            <person name="Clark M.D."/>
            <person name="Torroja C.F."/>
            <person name="Torrance J."/>
            <person name="Berthelot C."/>
            <person name="Muffato M."/>
            <person name="Collins J.E."/>
            <person name="Humphray S."/>
            <person name="McLaren K."/>
            <person name="Matthews L."/>
            <person name="McLaren S."/>
            <person name="Sealy I."/>
            <person name="Caccamo M."/>
            <person name="Churcher C."/>
            <person name="Scott C."/>
            <person name="Barrett J.C."/>
            <person name="Koch R."/>
            <person name="Rauch G.J."/>
            <person name="White S."/>
            <person name="Chow W."/>
            <person name="Kilian B."/>
            <person name="Quintais L.T."/>
            <person name="Guerra-Assuncao J.A."/>
            <person name="Zhou Y."/>
            <person name="Gu Y."/>
            <person name="Yen J."/>
            <person name="Vogel J.H."/>
            <person name="Eyre T."/>
            <person name="Redmond S."/>
            <person name="Banerjee R."/>
            <person name="Chi J."/>
            <person name="Fu B."/>
            <person name="Langley E."/>
            <person name="Maguire S.F."/>
            <person name="Laird G.K."/>
            <person name="Lloyd D."/>
            <person name="Kenyon E."/>
            <person name="Donaldson S."/>
            <person name="Sehra H."/>
            <person name="Almeida-King J."/>
            <person name="Loveland J."/>
            <person name="Trevanion S."/>
            <person name="Jones M."/>
            <person name="Quail M."/>
            <person name="Willey D."/>
            <person name="Hunt A."/>
            <person name="Burton J."/>
            <person name="Sims S."/>
            <person name="McLay K."/>
            <person name="Plumb B."/>
            <person name="Davis J."/>
            <person name="Clee C."/>
            <person name="Oliver K."/>
            <person name="Clark R."/>
            <person name="Riddle C."/>
            <person name="Elliot D."/>
            <person name="Threadgold G."/>
            <person name="Harden G."/>
            <person name="Ware D."/>
            <person name="Begum S."/>
            <person name="Mortimore B."/>
            <person name="Kerry G."/>
            <person name="Heath P."/>
            <person name="Phillimore B."/>
            <person name="Tracey A."/>
            <person name="Corby N."/>
            <person name="Dunn M."/>
            <person name="Johnson C."/>
            <person name="Wood J."/>
            <person name="Clark S."/>
            <person name="Pelan S."/>
            <person name="Griffiths G."/>
            <person name="Smith M."/>
            <person name="Glithero R."/>
            <person name="Howden P."/>
            <person name="Barker N."/>
            <person name="Lloyd C."/>
            <person name="Stevens C."/>
            <person name="Harley J."/>
            <person name="Holt K."/>
            <person name="Panagiotidis G."/>
            <person name="Lovell J."/>
            <person name="Beasley H."/>
            <person name="Henderson C."/>
            <person name="Gordon D."/>
            <person name="Auger K."/>
            <person name="Wright D."/>
            <person name="Collins J."/>
            <person name="Raisen C."/>
            <person name="Dyer L."/>
            <person name="Leung K."/>
            <person name="Robertson L."/>
            <person name="Ambridge K."/>
            <person name="Leongamornlert D."/>
            <person name="McGuire S."/>
            <person name="Gilderthorp R."/>
            <person name="Griffiths C."/>
            <person name="Manthravadi D."/>
            <person name="Nichol S."/>
            <person name="Barker G."/>
            <person name="Whitehead S."/>
            <person name="Kay M."/>
            <person name="Brown J."/>
            <person name="Murnane C."/>
            <person name="Gray E."/>
            <person name="Humphries M."/>
            <person name="Sycamore N."/>
            <person name="Barker D."/>
            <person name="Saunders D."/>
            <person name="Wallis J."/>
            <person name="Babbage A."/>
            <person name="Hammond S."/>
            <person name="Mashreghi-Mohammadi M."/>
            <person name="Barr L."/>
            <person name="Martin S."/>
            <person name="Wray P."/>
            <person name="Ellington A."/>
            <person name="Matthews N."/>
            <person name="Ellwood M."/>
            <person name="Woodmansey R."/>
            <person name="Clark G."/>
            <person name="Cooper J."/>
            <person name="Tromans A."/>
            <person name="Grafham D."/>
            <person name="Skuce C."/>
            <person name="Pandian R."/>
            <person name="Andrews R."/>
            <person name="Harrison E."/>
            <person name="Kimberley A."/>
            <person name="Garnett J."/>
            <person name="Fosker N."/>
            <person name="Hall R."/>
            <person name="Garner P."/>
            <person name="Kelly D."/>
            <person name="Bird C."/>
            <person name="Palmer S."/>
            <person name="Gehring I."/>
            <person name="Berger A."/>
            <person name="Dooley C.M."/>
            <person name="Ersan-Urun Z."/>
            <person name="Eser C."/>
            <person name="Geiger H."/>
            <person name="Geisler M."/>
            <person name="Karotki L."/>
            <person name="Kirn A."/>
            <person name="Konantz J."/>
            <person name="Konantz M."/>
            <person name="Oberlander M."/>
            <person name="Rudolph-Geiger S."/>
            <person name="Teucke M."/>
            <person name="Lanz C."/>
            <person name="Raddatz G."/>
            <person name="Osoegawa K."/>
            <person name="Zhu B."/>
            <person name="Rapp A."/>
            <person name="Widaa S."/>
            <person name="Langford C."/>
            <person name="Yang F."/>
            <person name="Schuster S.C."/>
            <person name="Carter N.P."/>
            <person name="Harrow J."/>
            <person name="Ning Z."/>
            <person name="Herrero J."/>
            <person name="Searle S.M."/>
            <person name="Enright A."/>
            <person name="Geisler R."/>
            <person name="Plasterk R.H."/>
            <person name="Lee C."/>
            <person name="Westerfield M."/>
            <person name="de Jong P.J."/>
            <person name="Zon L.I."/>
            <person name="Postlethwait J.H."/>
            <person name="Nusslein-Volhard C."/>
            <person name="Hubbard T.J."/>
            <person name="Roest Crollius H."/>
            <person name="Rogers J."/>
            <person name="Stemple D.L."/>
        </authorList>
    </citation>
    <scope>NUCLEOTIDE SEQUENCE [LARGE SCALE GENOMIC DNA]</scope>
    <source>
        <strain>Tuebingen</strain>
    </source>
</reference>
<reference key="3">
    <citation type="submission" date="2005-06" db="EMBL/GenBank/DDBJ databases">
        <authorList>
            <consortium name="NIH - Zebrafish Gene Collection (ZGC) project"/>
        </authorList>
    </citation>
    <scope>NUCLEOTIDE SEQUENCE [LARGE SCALE MRNA]</scope>
    <source>
        <tissue>Embryo</tissue>
    </source>
</reference>
<comment type="similarity">
    <text evidence="1">Belongs to the costars family.</text>
</comment>
<name>ABRAL_DANRE</name>
<feature type="chain" id="PRO_0000365538" description="Costars family protein ABRACL">
    <location>
        <begin position="1"/>
        <end position="81"/>
    </location>
</feature>
<sequence length="81" mass="8953">MNVEHEVSLLIDEIRRLGSKNADGKTSVKFGVLFNDDQCANLFEALVGTLKAAKRKKVITFDGELLLQGVHDNVDVVLLQD</sequence>
<gene>
    <name type="primary">abracl</name>
    <name type="ORF">si:dkey-34f16.3</name>
</gene>
<proteinExistence type="inferred from homology"/>
<protein>
    <recommendedName>
        <fullName>Costars family protein ABRACL</fullName>
    </recommendedName>
    <alternativeName>
        <fullName>ABRA C-terminal-like protein</fullName>
    </alternativeName>
</protein>
<dbReference type="EMBL" id="AY398399">
    <property type="protein sequence ID" value="AAQ97832.1"/>
    <property type="molecule type" value="mRNA"/>
</dbReference>
<dbReference type="EMBL" id="BX248390">
    <property type="protein sequence ID" value="CAI21153.1"/>
    <property type="molecule type" value="Genomic_DNA"/>
</dbReference>
<dbReference type="EMBL" id="BC097017">
    <property type="protein sequence ID" value="AAH97017.1"/>
    <property type="molecule type" value="mRNA"/>
</dbReference>
<dbReference type="RefSeq" id="NP_998807.1">
    <property type="nucleotide sequence ID" value="NM_213642.2"/>
</dbReference>
<dbReference type="SMR" id="Q6TGV7"/>
<dbReference type="FunCoup" id="Q6TGV7">
    <property type="interactions" value="66"/>
</dbReference>
<dbReference type="STRING" id="7955.ENSDARP00000062930"/>
<dbReference type="PaxDb" id="7955-ENSDARP00000062930"/>
<dbReference type="Ensembl" id="ENSDART00000062931">
    <property type="protein sequence ID" value="ENSDARP00000062930"/>
    <property type="gene ID" value="ENSDARG00000042876"/>
</dbReference>
<dbReference type="Ensembl" id="ENSDART00000147466">
    <property type="protein sequence ID" value="ENSDARP00000116774"/>
    <property type="gene ID" value="ENSDARG00000042876"/>
</dbReference>
<dbReference type="Ensembl" id="ENSDART00000153317">
    <property type="protein sequence ID" value="ENSDARP00000127389"/>
    <property type="gene ID" value="ENSDARG00000042876"/>
</dbReference>
<dbReference type="GeneID" id="336650"/>
<dbReference type="KEGG" id="dre:336650"/>
<dbReference type="AGR" id="ZFIN:ZDB-GENE-030131-8594"/>
<dbReference type="CTD" id="58527"/>
<dbReference type="ZFIN" id="ZDB-GENE-030131-8594">
    <property type="gene designation" value="abracl"/>
</dbReference>
<dbReference type="eggNOG" id="KOG3376">
    <property type="taxonomic scope" value="Eukaryota"/>
</dbReference>
<dbReference type="HOGENOM" id="CLU_173478_0_0_1"/>
<dbReference type="InParanoid" id="Q6TGV7"/>
<dbReference type="OMA" id="QRVHDNV"/>
<dbReference type="OrthoDB" id="9871914at2759"/>
<dbReference type="PhylomeDB" id="Q6TGV7"/>
<dbReference type="PRO" id="PR:Q6TGV7"/>
<dbReference type="Proteomes" id="UP000000437">
    <property type="component" value="Chromosome 20"/>
</dbReference>
<dbReference type="Bgee" id="ENSDARG00000042876">
    <property type="expression patterns" value="Expressed in caudal fin and 26 other cell types or tissues"/>
</dbReference>
<dbReference type="GO" id="GO:0032970">
    <property type="term" value="P:regulation of actin filament-based process"/>
    <property type="evidence" value="ECO:0000318"/>
    <property type="project" value="GO_Central"/>
</dbReference>
<dbReference type="FunFam" id="1.10.10.1540:FF:000002">
    <property type="entry name" value="costars family protein ABRACL"/>
    <property type="match status" value="1"/>
</dbReference>
<dbReference type="Gene3D" id="1.10.10.1540">
    <property type="entry name" value="Costar domain"/>
    <property type="match status" value="1"/>
</dbReference>
<dbReference type="InterPro" id="IPR044302">
    <property type="entry name" value="Costars"/>
</dbReference>
<dbReference type="InterPro" id="IPR027817">
    <property type="entry name" value="Costars_dom"/>
</dbReference>
<dbReference type="InterPro" id="IPR038095">
    <property type="entry name" value="Costars_sf"/>
</dbReference>
<dbReference type="PANTHER" id="PTHR46334">
    <property type="entry name" value="COSTARS FAMILY PROTEIN ABRACL"/>
    <property type="match status" value="1"/>
</dbReference>
<dbReference type="PANTHER" id="PTHR46334:SF1">
    <property type="entry name" value="COSTARS FAMILY PROTEIN ABRACL"/>
    <property type="match status" value="1"/>
</dbReference>
<dbReference type="Pfam" id="PF14705">
    <property type="entry name" value="Costars"/>
    <property type="match status" value="1"/>
</dbReference>
<dbReference type="SMART" id="SM01283">
    <property type="entry name" value="Costars"/>
    <property type="match status" value="1"/>
</dbReference>
<accession>Q6TGV7</accession>
<organism>
    <name type="scientific">Danio rerio</name>
    <name type="common">Zebrafish</name>
    <name type="synonym">Brachydanio rerio</name>
    <dbReference type="NCBI Taxonomy" id="7955"/>
    <lineage>
        <taxon>Eukaryota</taxon>
        <taxon>Metazoa</taxon>
        <taxon>Chordata</taxon>
        <taxon>Craniata</taxon>
        <taxon>Vertebrata</taxon>
        <taxon>Euteleostomi</taxon>
        <taxon>Actinopterygii</taxon>
        <taxon>Neopterygii</taxon>
        <taxon>Teleostei</taxon>
        <taxon>Ostariophysi</taxon>
        <taxon>Cypriniformes</taxon>
        <taxon>Danionidae</taxon>
        <taxon>Danioninae</taxon>
        <taxon>Danio</taxon>
    </lineage>
</organism>
<keyword id="KW-1185">Reference proteome</keyword>